<organism>
    <name type="scientific">Nitrobacter winogradskyi (strain ATCC 25391 / DSM 10237 / CIP 104748 / NCIMB 11846 / Nb-255)</name>
    <dbReference type="NCBI Taxonomy" id="323098"/>
    <lineage>
        <taxon>Bacteria</taxon>
        <taxon>Pseudomonadati</taxon>
        <taxon>Pseudomonadota</taxon>
        <taxon>Alphaproteobacteria</taxon>
        <taxon>Hyphomicrobiales</taxon>
        <taxon>Nitrobacteraceae</taxon>
        <taxon>Nitrobacter</taxon>
    </lineage>
</organism>
<gene>
    <name evidence="1" type="primary">rpsI</name>
    <name type="ordered locus">Nwi_1422</name>
</gene>
<sequence>MADTIQSLDQLSALKPAESEAPKHTKKVDKYGRAYATGKRKDAVARVWIKPGAGKILVNAREVDVYFARPVLRMMIQQPLVAAARAGQYDVVCTVAGGGLSGQAGAVRHGLSKALTHFEPELRGVLKKGGFLTRDSRVVERKKYGKAKARRSFQFSKR</sequence>
<feature type="chain" id="PRO_1000051271" description="Small ribosomal subunit protein uS9">
    <location>
        <begin position="1"/>
        <end position="158"/>
    </location>
</feature>
<name>RS9_NITWN</name>
<proteinExistence type="inferred from homology"/>
<evidence type="ECO:0000255" key="1">
    <source>
        <dbReference type="HAMAP-Rule" id="MF_00532"/>
    </source>
</evidence>
<evidence type="ECO:0000305" key="2"/>
<comment type="similarity">
    <text evidence="1">Belongs to the universal ribosomal protein uS9 family.</text>
</comment>
<accession>Q3SSQ8</accession>
<reference key="1">
    <citation type="journal article" date="2006" name="Appl. Environ. Microbiol.">
        <title>Genome sequence of the chemolithoautotrophic nitrite-oxidizing bacterium Nitrobacter winogradskyi Nb-255.</title>
        <authorList>
            <person name="Starkenburg S.R."/>
            <person name="Chain P.S.G."/>
            <person name="Sayavedra-Soto L.A."/>
            <person name="Hauser L."/>
            <person name="Land M.L."/>
            <person name="Larimer F.W."/>
            <person name="Malfatti S.A."/>
            <person name="Klotz M.G."/>
            <person name="Bottomley P.J."/>
            <person name="Arp D.J."/>
            <person name="Hickey W.J."/>
        </authorList>
    </citation>
    <scope>NUCLEOTIDE SEQUENCE [LARGE SCALE GENOMIC DNA]</scope>
    <source>
        <strain>ATCC 25391 / DSM 10237 / CIP 104748 / NCIMB 11846 / Nb-255</strain>
    </source>
</reference>
<keyword id="KW-1185">Reference proteome</keyword>
<keyword id="KW-0687">Ribonucleoprotein</keyword>
<keyword id="KW-0689">Ribosomal protein</keyword>
<protein>
    <recommendedName>
        <fullName evidence="1">Small ribosomal subunit protein uS9</fullName>
    </recommendedName>
    <alternativeName>
        <fullName evidence="2">30S ribosomal protein S9</fullName>
    </alternativeName>
</protein>
<dbReference type="EMBL" id="CP000115">
    <property type="protein sequence ID" value="ABA04683.1"/>
    <property type="molecule type" value="Genomic_DNA"/>
</dbReference>
<dbReference type="RefSeq" id="WP_011314692.1">
    <property type="nucleotide sequence ID" value="NC_007406.1"/>
</dbReference>
<dbReference type="SMR" id="Q3SSQ8"/>
<dbReference type="STRING" id="323098.Nwi_1422"/>
<dbReference type="KEGG" id="nwi:Nwi_1422"/>
<dbReference type="eggNOG" id="COG0103">
    <property type="taxonomic scope" value="Bacteria"/>
</dbReference>
<dbReference type="HOGENOM" id="CLU_046483_2_0_5"/>
<dbReference type="OrthoDB" id="9803965at2"/>
<dbReference type="Proteomes" id="UP000002531">
    <property type="component" value="Chromosome"/>
</dbReference>
<dbReference type="GO" id="GO:0022627">
    <property type="term" value="C:cytosolic small ribosomal subunit"/>
    <property type="evidence" value="ECO:0007669"/>
    <property type="project" value="TreeGrafter"/>
</dbReference>
<dbReference type="GO" id="GO:0003723">
    <property type="term" value="F:RNA binding"/>
    <property type="evidence" value="ECO:0007669"/>
    <property type="project" value="TreeGrafter"/>
</dbReference>
<dbReference type="GO" id="GO:0003735">
    <property type="term" value="F:structural constituent of ribosome"/>
    <property type="evidence" value="ECO:0007669"/>
    <property type="project" value="InterPro"/>
</dbReference>
<dbReference type="GO" id="GO:0006412">
    <property type="term" value="P:translation"/>
    <property type="evidence" value="ECO:0007669"/>
    <property type="project" value="UniProtKB-UniRule"/>
</dbReference>
<dbReference type="FunFam" id="3.30.230.10:FF:000034">
    <property type="entry name" value="30S ribosomal protein S9"/>
    <property type="match status" value="1"/>
</dbReference>
<dbReference type="Gene3D" id="3.30.230.10">
    <property type="match status" value="1"/>
</dbReference>
<dbReference type="HAMAP" id="MF_00532_B">
    <property type="entry name" value="Ribosomal_uS9_B"/>
    <property type="match status" value="1"/>
</dbReference>
<dbReference type="InterPro" id="IPR020568">
    <property type="entry name" value="Ribosomal_Su5_D2-typ_SF"/>
</dbReference>
<dbReference type="InterPro" id="IPR000754">
    <property type="entry name" value="Ribosomal_uS9"/>
</dbReference>
<dbReference type="InterPro" id="IPR023035">
    <property type="entry name" value="Ribosomal_uS9_bac/plastid"/>
</dbReference>
<dbReference type="InterPro" id="IPR020574">
    <property type="entry name" value="Ribosomal_uS9_CS"/>
</dbReference>
<dbReference type="InterPro" id="IPR014721">
    <property type="entry name" value="Ribsml_uS5_D2-typ_fold_subgr"/>
</dbReference>
<dbReference type="NCBIfam" id="NF001099">
    <property type="entry name" value="PRK00132.1"/>
    <property type="match status" value="1"/>
</dbReference>
<dbReference type="PANTHER" id="PTHR21569">
    <property type="entry name" value="RIBOSOMAL PROTEIN S9"/>
    <property type="match status" value="1"/>
</dbReference>
<dbReference type="PANTHER" id="PTHR21569:SF1">
    <property type="entry name" value="SMALL RIBOSOMAL SUBUNIT PROTEIN US9M"/>
    <property type="match status" value="1"/>
</dbReference>
<dbReference type="Pfam" id="PF00380">
    <property type="entry name" value="Ribosomal_S9"/>
    <property type="match status" value="1"/>
</dbReference>
<dbReference type="SUPFAM" id="SSF54211">
    <property type="entry name" value="Ribosomal protein S5 domain 2-like"/>
    <property type="match status" value="1"/>
</dbReference>
<dbReference type="PROSITE" id="PS00360">
    <property type="entry name" value="RIBOSOMAL_S9"/>
    <property type="match status" value="1"/>
</dbReference>